<evidence type="ECO:0000250" key="1"/>
<evidence type="ECO:0000255" key="2">
    <source>
        <dbReference type="PROSITE-ProRule" id="PRU10057"/>
    </source>
</evidence>
<evidence type="ECO:0000269" key="3">
    <source>
    </source>
</evidence>
<evidence type="ECO:0000305" key="4"/>
<sequence length="321" mass="33695">MSRKLRTLMAALCALPLAFAAAPPAHAADPTTMTNGFYADPDSSASRWAAANPGDGRAAAINASIANTPMARWFGSWSGAIGTAAGAYAGAADGRDKLPILVAYNIYNRDYCGGHSAGGAASPSAYADWIARFAGGIAARPAVVILEPDSLGDYGCMNPAQIDEREAMLTNALVQFNRQAPNTWVYMDAGNPRWADAATMARRLHEAGLRQAHGFSLNVSNYITTAENTAYGNAVNNELAARYGYTKPFVVDTSRNGNGSNGEWCNPSGRRIGTPTRTGGGAEMLLWIKTPGESDGNCGVGSGSTAGQFLPEVAYKMIYGY</sequence>
<name>GUN1_STRHA</name>
<proteinExistence type="evidence at protein level"/>
<protein>
    <recommendedName>
        <fullName>Endoglucanase 1</fullName>
        <ecNumber>3.2.1.4</ecNumber>
    </recommendedName>
    <alternativeName>
        <fullName>CEL1</fullName>
    </alternativeName>
    <alternativeName>
        <fullName>CMCase I</fullName>
    </alternativeName>
    <alternativeName>
        <fullName>Cellulase I</fullName>
    </alternativeName>
    <alternativeName>
        <fullName>Endo-1,4-beta-glucanase 1</fullName>
    </alternativeName>
</protein>
<dbReference type="EC" id="3.2.1.4"/>
<dbReference type="EMBL" id="Z12157">
    <property type="protein sequence ID" value="CAA78145.1"/>
    <property type="molecule type" value="Genomic_DNA"/>
</dbReference>
<dbReference type="SMR" id="P33682"/>
<dbReference type="CAZy" id="GH6">
    <property type="family name" value="Glycoside Hydrolase Family 6"/>
</dbReference>
<dbReference type="GO" id="GO:0008810">
    <property type="term" value="F:cellulase activity"/>
    <property type="evidence" value="ECO:0007669"/>
    <property type="project" value="UniProtKB-EC"/>
</dbReference>
<dbReference type="GO" id="GO:0030245">
    <property type="term" value="P:cellulose catabolic process"/>
    <property type="evidence" value="ECO:0007669"/>
    <property type="project" value="UniProtKB-KW"/>
</dbReference>
<dbReference type="Gene3D" id="3.20.20.40">
    <property type="entry name" value="1, 4-beta cellobiohydrolase"/>
    <property type="match status" value="1"/>
</dbReference>
<dbReference type="InterPro" id="IPR016288">
    <property type="entry name" value="Beta_cellobiohydrolase"/>
</dbReference>
<dbReference type="InterPro" id="IPR036434">
    <property type="entry name" value="Beta_cellobiohydrolase_sf"/>
</dbReference>
<dbReference type="InterPro" id="IPR001524">
    <property type="entry name" value="Glyco_hydro_6_CS"/>
</dbReference>
<dbReference type="PANTHER" id="PTHR34876">
    <property type="match status" value="1"/>
</dbReference>
<dbReference type="PANTHER" id="PTHR34876:SF4">
    <property type="entry name" value="1,4-BETA-D-GLUCAN CELLOBIOHYDROLASE C-RELATED"/>
    <property type="match status" value="1"/>
</dbReference>
<dbReference type="Pfam" id="PF01341">
    <property type="entry name" value="Glyco_hydro_6"/>
    <property type="match status" value="1"/>
</dbReference>
<dbReference type="PIRSF" id="PIRSF001100">
    <property type="entry name" value="Beta_cellobiohydrolase"/>
    <property type="match status" value="1"/>
</dbReference>
<dbReference type="PRINTS" id="PR00733">
    <property type="entry name" value="GLHYDRLASE6"/>
</dbReference>
<dbReference type="SUPFAM" id="SSF51989">
    <property type="entry name" value="Glycosyl hydrolases family 6, cellulases"/>
    <property type="match status" value="1"/>
</dbReference>
<dbReference type="PROSITE" id="PS00656">
    <property type="entry name" value="GLYCOSYL_HYDROL_F6_2"/>
    <property type="match status" value="1"/>
</dbReference>
<accession>P33682</accession>
<gene>
    <name type="primary">celA1</name>
</gene>
<reference key="1">
    <citation type="journal article" date="1992" name="J. Bacteriol.">
        <title>Cloning and nucleotide sequence of celA1, and endo-beta-1,4-glucanase-encoding gene from Streptomyces halstedii JM8.</title>
        <authorList>
            <person name="Fernandez-Abalos J.M."/>
            <person name="Sanchez P."/>
            <person name="Coll-Fresno P.M."/>
            <person name="Villanueva J.R."/>
            <person name="Perez P."/>
            <person name="Santamaria R.I."/>
        </authorList>
    </citation>
    <scope>NUCLEOTIDE SEQUENCE [GENOMIC DNA]</scope>
    <scope>PROTEIN SEQUENCE OF 28-33</scope>
    <source>
        <strain>JM8 / CECT3310</strain>
    </source>
</reference>
<organism>
    <name type="scientific">Streptomyces halstedii</name>
    <dbReference type="NCBI Taxonomy" id="1944"/>
    <lineage>
        <taxon>Bacteria</taxon>
        <taxon>Bacillati</taxon>
        <taxon>Actinomycetota</taxon>
        <taxon>Actinomycetes</taxon>
        <taxon>Kitasatosporales</taxon>
        <taxon>Streptomycetaceae</taxon>
        <taxon>Streptomyces</taxon>
    </lineage>
</organism>
<feature type="signal peptide" evidence="3">
    <location>
        <begin position="1"/>
        <end position="27"/>
    </location>
</feature>
<feature type="chain" id="PRO_0000007906" description="Endoglucanase 1">
    <location>
        <begin position="28"/>
        <end position="321"/>
    </location>
</feature>
<feature type="active site" evidence="1">
    <location>
        <position position="110"/>
    </location>
</feature>
<feature type="active site" description="Proton donor" evidence="2">
    <location>
        <position position="149"/>
    </location>
</feature>
<feature type="active site" description="Nucleophile" evidence="1">
    <location>
        <position position="295"/>
    </location>
</feature>
<feature type="disulfide bond" evidence="1">
    <location>
        <begin position="112"/>
        <end position="156"/>
    </location>
</feature>
<comment type="function">
    <text>Implicated in the mechanism of induction exerted by cellobiose.</text>
</comment>
<comment type="catalytic activity">
    <reaction>
        <text>Endohydrolysis of (1-&gt;4)-beta-D-glucosidic linkages in cellulose, lichenin and cereal beta-D-glucans.</text>
        <dbReference type="EC" id="3.2.1.4"/>
    </reaction>
</comment>
<comment type="similarity">
    <text evidence="4">Belongs to the glycosyl hydrolase 6 (cellulase B) family.</text>
</comment>
<comment type="caution">
    <text evidence="4">It is uncertain whether Met-1 or Met-9 is the initiator.</text>
</comment>
<keyword id="KW-0119">Carbohydrate metabolism</keyword>
<keyword id="KW-0136">Cellulose degradation</keyword>
<keyword id="KW-0903">Direct protein sequencing</keyword>
<keyword id="KW-1015">Disulfide bond</keyword>
<keyword id="KW-0326">Glycosidase</keyword>
<keyword id="KW-0378">Hydrolase</keyword>
<keyword id="KW-0624">Polysaccharide degradation</keyword>
<keyword id="KW-0732">Signal</keyword>